<accession>Q5ZPJ7</accession>
<evidence type="ECO:0000250" key="1"/>
<evidence type="ECO:0000255" key="2"/>
<evidence type="ECO:0000255" key="3">
    <source>
        <dbReference type="PROSITE-ProRule" id="PRU00031"/>
    </source>
</evidence>
<evidence type="ECO:0000269" key="4">
    <source>
    </source>
</evidence>
<evidence type="ECO:0000269" key="5">
    <source>
    </source>
</evidence>
<evidence type="ECO:0000269" key="6">
    <source>
    </source>
</evidence>
<evidence type="ECO:0000269" key="7">
    <source>
    </source>
</evidence>
<evidence type="ECO:0000303" key="8">
    <source>
    </source>
</evidence>
<evidence type="ECO:0000305" key="9"/>
<evidence type="ECO:0000305" key="10">
    <source>
    </source>
</evidence>
<evidence type="ECO:0007829" key="11">
    <source>
        <dbReference type="PDB" id="2M99"/>
    </source>
</evidence>
<feature type="signal peptide" evidence="1">
    <location>
        <begin position="1"/>
        <end position="24"/>
    </location>
</feature>
<feature type="chain" id="PRO_5000072173" description="Kunitz-type serine protease inhibitor NACI">
    <location>
        <begin position="25"/>
        <end position="81"/>
    </location>
</feature>
<feature type="domain" description="BPTI/Kunitz inhibitor" evidence="3">
    <location>
        <begin position="29"/>
        <end position="79"/>
    </location>
</feature>
<feature type="site" description="Reactive bond for chymotrypsin" evidence="1">
    <location>
        <begin position="39"/>
        <end position="40"/>
    </location>
</feature>
<feature type="glycosylation site" description="N-linked (GlcNAc...) asparagine" evidence="2">
    <location>
        <position position="76"/>
    </location>
</feature>
<feature type="disulfide bond" evidence="3 6">
    <location>
        <begin position="29"/>
        <end position="79"/>
    </location>
</feature>
<feature type="disulfide bond" evidence="3 6">
    <location>
        <begin position="38"/>
        <end position="62"/>
    </location>
</feature>
<feature type="disulfide bond" evidence="3 6">
    <location>
        <begin position="54"/>
        <end position="75"/>
    </location>
</feature>
<feature type="helix" evidence="11">
    <location>
        <begin position="27"/>
        <end position="30"/>
    </location>
</feature>
<feature type="helix" evidence="11">
    <location>
        <begin position="35"/>
        <end position="37"/>
    </location>
</feature>
<feature type="strand" evidence="11">
    <location>
        <begin position="42"/>
        <end position="48"/>
    </location>
</feature>
<feature type="helix" evidence="11">
    <location>
        <begin position="49"/>
        <end position="51"/>
    </location>
</feature>
<feature type="strand" evidence="11">
    <location>
        <begin position="53"/>
        <end position="59"/>
    </location>
</feature>
<feature type="strand" evidence="11">
    <location>
        <begin position="61"/>
        <end position="63"/>
    </location>
</feature>
<feature type="helix" evidence="11">
    <location>
        <begin position="72"/>
        <end position="79"/>
    </location>
</feature>
<proteinExistence type="evidence at protein level"/>
<protein>
    <recommendedName>
        <fullName>Kunitz-type serine protease inhibitor NACI</fullName>
    </recommendedName>
    <alternativeName>
        <fullName>Naja atra chymotrypsin inhibitor</fullName>
        <shortName>ACI</shortName>
        <shortName evidence="8">NA-CI</shortName>
    </alternativeName>
</protein>
<comment type="function">
    <text evidence="4 5 7">Serine protease inhibitor that inhibits chymotrypsin (Ki=25 nM) (PubMed:14990218, PubMed:15698956). Also interacts with vasopressin V2 receptor (V2R/AVPR2) (PubMed:35122240). Inhibits vasopressin binding human V2R in the nanomolar range (Ki=112 nM), and also moderately inhibits vasopressin-induced cAMP production (IC(50)=138 nM). In vivo, intraperitoneal injection of this protein into rats increases diuresis by 2.2-fold, without any loss of electrolytes (PubMed:35122240).</text>
</comment>
<comment type="subcellular location">
    <subcellularLocation>
        <location evidence="4">Secreted</location>
    </subcellularLocation>
</comment>
<comment type="tissue specificity">
    <text evidence="10">Expressed by the venom gland.</text>
</comment>
<comment type="mass spectrometry" mass="6403.8" method="MALDI" evidence="5"/>
<comment type="similarity">
    <text evidence="9">Belongs to the venom Kunitz-type family.</text>
</comment>
<reference key="1">
    <citation type="journal article" date="2005" name="Biochim. Biophys. Acta">
        <title>Taiwan cobra chymotrypsin inhibitor: cloning, functional expression and gene organization.</title>
        <authorList>
            <person name="Cheng Y.-C."/>
            <person name="Yan F.-J."/>
            <person name="Chang L.-S."/>
        </authorList>
    </citation>
    <scope>NUCLEOTIDE SEQUENCE [GENOMIC DNA / MRNA]</scope>
    <scope>FUNCTION</scope>
    <scope>RECOMBINANT EXPRESSION</scope>
    <source>
        <tissue>Liver</tissue>
        <tissue>Venom gland</tissue>
    </source>
</reference>
<reference key="2">
    <citation type="journal article" date="2004" name="Comp. Biochem. Physiol.">
        <title>Purification, characterization and primary structure of a chymotrypsin inhibitor from Naja atra venom.</title>
        <authorList>
            <person name="Zhou X.D."/>
            <person name="Jin Y."/>
            <person name="Lu Q.M."/>
            <person name="Li D.S."/>
            <person name="Zhu S.W."/>
            <person name="Wang W.Y."/>
            <person name="Xiong Y.L."/>
        </authorList>
    </citation>
    <scope>PROTEIN SEQUENCE OF 25-81</scope>
    <scope>FUNCTION</scope>
    <scope>MASS SPECTROMETRY</scope>
    <scope>SUBCELLULAR LOCATION</scope>
    <source>
        <tissue>Venom</tissue>
    </source>
</reference>
<reference key="3">
    <citation type="journal article" date="2022" name="Br. J. Pharmacol.">
        <title>A new Kunitz-type snake toxin family associated with an original mode of interaction with the vasopressin 2 receptor.</title>
        <authorList>
            <person name="Droctove L."/>
            <person name="Ciolek J."/>
            <person name="Mendre C."/>
            <person name="Chorfa A."/>
            <person name="Huerta P."/>
            <person name="Carvalho C."/>
            <person name="Gouin C."/>
            <person name="Lancien M."/>
            <person name="Stanajic-Petrovic G."/>
            <person name="Braco L."/>
            <person name="Blanchet G."/>
            <person name="Upert G."/>
            <person name="De Pauw G."/>
            <person name="Barbe P."/>
            <person name="Keck M."/>
            <person name="Mourier G."/>
            <person name="Mouillac B."/>
            <person name="Denis S."/>
            <person name="Rodriguez de la Vega R.C."/>
            <person name="Quinton L."/>
            <person name="Gilles N."/>
        </authorList>
    </citation>
    <scope>FUNCTION</scope>
    <scope>BIOASSAY</scope>
    <scope>SYNTHESIS</scope>
    <source>
        <tissue>Venom</tissue>
    </source>
</reference>
<reference key="4">
    <citation type="journal article" date="2013" name="Molecules">
        <title>NMR solution structure of a chymotrypsin inhibitor from the Taiwan cobra Naja naja atra.</title>
        <authorList>
            <person name="Lin Y.J."/>
            <person name="Ikeya T."/>
            <person name="Guntert P."/>
            <person name="Chang L.S."/>
        </authorList>
    </citation>
    <scope>STRUCTURE BY NMR OF 25-81</scope>
    <scope>DISULFIDE BONDS</scope>
</reference>
<dbReference type="EMBL" id="AJ586046">
    <property type="protein sequence ID" value="CAE51866.1"/>
    <property type="molecule type" value="mRNA"/>
</dbReference>
<dbReference type="EMBL" id="AJ586047">
    <property type="protein sequence ID" value="CAE51867.1"/>
    <property type="molecule type" value="Genomic_DNA"/>
</dbReference>
<dbReference type="PDB" id="2M99">
    <property type="method" value="NMR"/>
    <property type="chains" value="A=25-81"/>
</dbReference>
<dbReference type="PDBsum" id="2M99"/>
<dbReference type="BMRB" id="Q5ZPJ7"/>
<dbReference type="SMR" id="Q5ZPJ7"/>
<dbReference type="MEROPS" id="I02.065"/>
<dbReference type="EvolutionaryTrace" id="Q5ZPJ7"/>
<dbReference type="GO" id="GO:0005576">
    <property type="term" value="C:extracellular region"/>
    <property type="evidence" value="ECO:0007669"/>
    <property type="project" value="UniProtKB-SubCell"/>
</dbReference>
<dbReference type="GO" id="GO:0004867">
    <property type="term" value="F:serine-type endopeptidase inhibitor activity"/>
    <property type="evidence" value="ECO:0007669"/>
    <property type="project" value="UniProtKB-KW"/>
</dbReference>
<dbReference type="GO" id="GO:0090729">
    <property type="term" value="F:toxin activity"/>
    <property type="evidence" value="ECO:0007669"/>
    <property type="project" value="UniProtKB-KW"/>
</dbReference>
<dbReference type="CDD" id="cd22595">
    <property type="entry name" value="Kunitz_dendrotoxin"/>
    <property type="match status" value="1"/>
</dbReference>
<dbReference type="FunFam" id="4.10.410.10:FF:000020">
    <property type="entry name" value="Collagen, type VI, alpha 3"/>
    <property type="match status" value="1"/>
</dbReference>
<dbReference type="Gene3D" id="4.10.410.10">
    <property type="entry name" value="Pancreatic trypsin inhibitor Kunitz domain"/>
    <property type="match status" value="1"/>
</dbReference>
<dbReference type="InterPro" id="IPR002223">
    <property type="entry name" value="Kunitz_BPTI"/>
</dbReference>
<dbReference type="InterPro" id="IPR036880">
    <property type="entry name" value="Kunitz_BPTI_sf"/>
</dbReference>
<dbReference type="InterPro" id="IPR020901">
    <property type="entry name" value="Prtase_inh_Kunz-CS"/>
</dbReference>
<dbReference type="InterPro" id="IPR050098">
    <property type="entry name" value="TFPI/VKTCI-like"/>
</dbReference>
<dbReference type="PANTHER" id="PTHR10083">
    <property type="entry name" value="KUNITZ-TYPE PROTEASE INHIBITOR-RELATED"/>
    <property type="match status" value="1"/>
</dbReference>
<dbReference type="Pfam" id="PF00014">
    <property type="entry name" value="Kunitz_BPTI"/>
    <property type="match status" value="1"/>
</dbReference>
<dbReference type="PRINTS" id="PR00759">
    <property type="entry name" value="BASICPTASE"/>
</dbReference>
<dbReference type="SMART" id="SM00131">
    <property type="entry name" value="KU"/>
    <property type="match status" value="1"/>
</dbReference>
<dbReference type="SUPFAM" id="SSF57362">
    <property type="entry name" value="BPTI-like"/>
    <property type="match status" value="1"/>
</dbReference>
<dbReference type="PROSITE" id="PS00280">
    <property type="entry name" value="BPTI_KUNITZ_1"/>
    <property type="match status" value="1"/>
</dbReference>
<dbReference type="PROSITE" id="PS50279">
    <property type="entry name" value="BPTI_KUNITZ_2"/>
    <property type="match status" value="1"/>
</dbReference>
<sequence length="81" mass="8815">MSSGGLLLLLGLLTLWAELTPVSGRPRFCELAPSAGSCFAFVPSYYYNQYSNTCHSFTYSGCGGNANRFRTIDECNRTCVG</sequence>
<name>VKT_NAJAT</name>
<organism>
    <name type="scientific">Naja atra</name>
    <name type="common">Chinese cobra</name>
    <dbReference type="NCBI Taxonomy" id="8656"/>
    <lineage>
        <taxon>Eukaryota</taxon>
        <taxon>Metazoa</taxon>
        <taxon>Chordata</taxon>
        <taxon>Craniata</taxon>
        <taxon>Vertebrata</taxon>
        <taxon>Euteleostomi</taxon>
        <taxon>Lepidosauria</taxon>
        <taxon>Squamata</taxon>
        <taxon>Bifurcata</taxon>
        <taxon>Unidentata</taxon>
        <taxon>Episquamata</taxon>
        <taxon>Toxicofera</taxon>
        <taxon>Serpentes</taxon>
        <taxon>Colubroidea</taxon>
        <taxon>Elapidae</taxon>
        <taxon>Elapinae</taxon>
        <taxon>Naja</taxon>
    </lineage>
</organism>
<keyword id="KW-0002">3D-structure</keyword>
<keyword id="KW-0903">Direct protein sequencing</keyword>
<keyword id="KW-1015">Disulfide bond</keyword>
<keyword id="KW-1213">G-protein coupled receptor impairing toxin</keyword>
<keyword id="KW-0325">Glycoprotein</keyword>
<keyword id="KW-0646">Protease inhibitor</keyword>
<keyword id="KW-0964">Secreted</keyword>
<keyword id="KW-0722">Serine protease inhibitor</keyword>
<keyword id="KW-0732">Signal</keyword>
<keyword id="KW-0800">Toxin</keyword>